<gene>
    <name type="primary">atg18</name>
    <name type="ORF">Pc21g06730</name>
</gene>
<proteinExistence type="inferred from homology"/>
<protein>
    <recommendedName>
        <fullName>Autophagy-related protein 18</fullName>
    </recommendedName>
</protein>
<accession>A7KAM8</accession>
<accession>B6HJP2</accession>
<organism>
    <name type="scientific">Penicillium rubens (strain ATCC 28089 / DSM 1075 / NRRL 1951 / Wisconsin 54-1255)</name>
    <name type="common">Penicillium chrysogenum</name>
    <dbReference type="NCBI Taxonomy" id="500485"/>
    <lineage>
        <taxon>Eukaryota</taxon>
        <taxon>Fungi</taxon>
        <taxon>Dikarya</taxon>
        <taxon>Ascomycota</taxon>
        <taxon>Pezizomycotina</taxon>
        <taxon>Eurotiomycetes</taxon>
        <taxon>Eurotiomycetidae</taxon>
        <taxon>Eurotiales</taxon>
        <taxon>Aspergillaceae</taxon>
        <taxon>Penicillium</taxon>
        <taxon>Penicillium chrysogenum species complex</taxon>
    </lineage>
</organism>
<sequence length="427" mass="46100">MAMNFVTFNQDYSYLAVATSKGFQIFTTEPFAKSYEAKEGNIAVIEMLFSTSLVALILSPRRLQIQNTKRQCTICELTFPTTVLAVKLNRKRLVIVLEDQIYLYDIQTMKLLSTIDTSPNPNAICALAPSSENCYMAYPLPQKAPAAASTPAHAPPGTTHVSPTTGDVLIFDAVKLEAINVIEAHRSPLALIALNSDGTLLATASDKGTIIRIFSVPDGHKLYQFRRGSMPSRIYSMSFNTTSTLLCVSSSTETVHIFKLAQQGPSSDGSSSHSPPSRDHGSPPNTYGYAHEEDEAVGDAGSDSSLRKHNGTLMGMIRRTSQNVGGAVAARMGGYLPKGVSEMWEPARDFAWIKLPRSNPGPGGNTGAGPLRSVVAMSSNTPQVMVVTSDGNFYVFNIDLSKGGEGTLTKQYSVVDSTDRLGYTTEY</sequence>
<keyword id="KW-0072">Autophagy</keyword>
<keyword id="KW-0967">Endosome</keyword>
<keyword id="KW-0472">Membrane</keyword>
<keyword id="KW-0653">Protein transport</keyword>
<keyword id="KW-1185">Reference proteome</keyword>
<keyword id="KW-0677">Repeat</keyword>
<keyword id="KW-0813">Transport</keyword>
<keyword id="KW-0926">Vacuole</keyword>
<keyword id="KW-0853">WD repeat</keyword>
<feature type="chain" id="PRO_0000318004" description="Autophagy-related protein 18">
    <location>
        <begin position="1"/>
        <end position="427"/>
    </location>
</feature>
<feature type="repeat" description="WD 1">
    <location>
        <begin position="1"/>
        <end position="36"/>
    </location>
</feature>
<feature type="repeat" description="WD 2">
    <location>
        <begin position="69"/>
        <end position="114"/>
    </location>
</feature>
<feature type="repeat" description="WD 3">
    <location>
        <begin position="184"/>
        <end position="224"/>
    </location>
</feature>
<feature type="repeat" description="WD 4">
    <location>
        <begin position="229"/>
        <end position="268"/>
    </location>
</feature>
<feature type="repeat" description="WD 5">
    <location>
        <begin position="308"/>
        <end position="354"/>
    </location>
</feature>
<feature type="repeat" description="WD 6">
    <location>
        <begin position="366"/>
        <end position="406"/>
    </location>
</feature>
<feature type="region of interest" description="Disordered" evidence="3">
    <location>
        <begin position="262"/>
        <end position="290"/>
    </location>
</feature>
<feature type="short sequence motif" description="L/FRRG motif" evidence="2">
    <location>
        <begin position="225"/>
        <end position="229"/>
    </location>
</feature>
<feature type="compositionally biased region" description="Low complexity" evidence="3">
    <location>
        <begin position="265"/>
        <end position="275"/>
    </location>
</feature>
<reference key="1">
    <citation type="journal article" date="2007" name="Autophagy">
        <title>ATG genes involved in non-selective autophagy are conserved from yeast to man, but the selective Cvt and pexophagy pathways also require organism-specific genes.</title>
        <authorList>
            <person name="Meijer W.H."/>
            <person name="van der Klei I.J."/>
            <person name="Veenhuis M."/>
            <person name="Kiel J.A.K.W."/>
        </authorList>
    </citation>
    <scope>NUCLEOTIDE SEQUENCE [GENOMIC DNA]</scope>
    <scope>FUNCTION</scope>
</reference>
<reference key="2">
    <citation type="journal article" date="2008" name="Nat. Biotechnol.">
        <title>Genome sequencing and analysis of the filamentous fungus Penicillium chrysogenum.</title>
        <authorList>
            <person name="van den Berg M.A."/>
            <person name="Albang R."/>
            <person name="Albermann K."/>
            <person name="Badger J.H."/>
            <person name="Daran J.-M."/>
            <person name="Driessen A.J.M."/>
            <person name="Garcia-Estrada C."/>
            <person name="Fedorova N.D."/>
            <person name="Harris D.M."/>
            <person name="Heijne W.H.M."/>
            <person name="Joardar V.S."/>
            <person name="Kiel J.A.K.W."/>
            <person name="Kovalchuk A."/>
            <person name="Martin J.F."/>
            <person name="Nierman W.C."/>
            <person name="Nijland J.G."/>
            <person name="Pronk J.T."/>
            <person name="Roubos J.A."/>
            <person name="van der Klei I.J."/>
            <person name="van Peij N.N.M.E."/>
            <person name="Veenhuis M."/>
            <person name="von Doehren H."/>
            <person name="Wagner C."/>
            <person name="Wortman J.R."/>
            <person name="Bovenberg R.A.L."/>
        </authorList>
    </citation>
    <scope>NUCLEOTIDE SEQUENCE [LARGE SCALE GENOMIC DNA]</scope>
    <source>
        <strain>ATCC 28089 / DSM 1075 / NRRL 1951 / Wisconsin 54-1255</strain>
    </source>
</reference>
<comment type="function">
    <text evidence="1 4">The PI(3,5)P2 regulatory complex regulates both the synthesis and turnover of phosphatidylinositol 3,5-bisphosphate (PtdIns(3,5)P2). Necessary for proper vacuole morphology. Plays an important role in osmotically-induced vacuole fragmentation. Required for cytoplasm to vacuole transport (Cvt) vesicle formation, pexophagy and starvation-induced autophagy. Involved in correct atg9 trafficking to the pre-autophagosomal structure. Might also be involved in premeiotic DNA replication (By similarity).</text>
</comment>
<comment type="subunit">
    <text evidence="1">Component of the PI(3,5)P2 regulatory complex.</text>
</comment>
<comment type="subcellular location">
    <subcellularLocation>
        <location evidence="1">Preautophagosomal structure membrane</location>
        <topology evidence="1">Peripheral membrane protein</topology>
    </subcellularLocation>
    <subcellularLocation>
        <location evidence="1">Vacuole membrane</location>
        <topology evidence="1">Peripheral membrane protein</topology>
    </subcellularLocation>
    <subcellularLocation>
        <location evidence="1">Endosome membrane</location>
        <topology evidence="1">Peripheral membrane protein</topology>
    </subcellularLocation>
</comment>
<comment type="domain">
    <text evidence="1">The N-terminus might form a beta-propeller domain involved in specific binding to phosphatidylinositol 3,5-bisphosphate (PIP2), leading to the association of the protein to the membrane.</text>
</comment>
<comment type="domain">
    <text evidence="2">The L/FRRG motif is essential for the cytoplasm to vacuole transport (Cvt) pathway, for the recruitment of atg8 and atg16 to the PAS in nutrient-rich medium, and for its recruitment to and dissociation from the PAS under starvation conditions.</text>
</comment>
<comment type="similarity">
    <text evidence="5">Belongs to the WD repeat PROPPIN family.</text>
</comment>
<dbReference type="EMBL" id="EF110894">
    <property type="protein sequence ID" value="ABO31315.1"/>
    <property type="molecule type" value="Genomic_DNA"/>
</dbReference>
<dbReference type="EMBL" id="AM920436">
    <property type="protein sequence ID" value="CAP95570.1"/>
    <property type="molecule type" value="Genomic_DNA"/>
</dbReference>
<dbReference type="RefSeq" id="XP_002567717.1">
    <property type="nucleotide sequence ID" value="XM_002567671.1"/>
</dbReference>
<dbReference type="SMR" id="A7KAM8"/>
<dbReference type="STRING" id="500485.A7KAM8"/>
<dbReference type="VEuPathDB" id="FungiDB:PCH_Pc21g06730"/>
<dbReference type="eggNOG" id="KOG2110">
    <property type="taxonomic scope" value="Eukaryota"/>
</dbReference>
<dbReference type="HOGENOM" id="CLU_025895_5_2_1"/>
<dbReference type="OMA" id="NIAILEM"/>
<dbReference type="OrthoDB" id="1667587at2759"/>
<dbReference type="BioCyc" id="PCHR:PC21G06730-MONOMER"/>
<dbReference type="Proteomes" id="UP000000724">
    <property type="component" value="Contig Pc00c21"/>
</dbReference>
<dbReference type="GO" id="GO:0010008">
    <property type="term" value="C:endosome membrane"/>
    <property type="evidence" value="ECO:0007669"/>
    <property type="project" value="UniProtKB-SubCell"/>
</dbReference>
<dbReference type="GO" id="GO:0034045">
    <property type="term" value="C:phagophore assembly site membrane"/>
    <property type="evidence" value="ECO:0007669"/>
    <property type="project" value="UniProtKB-SubCell"/>
</dbReference>
<dbReference type="GO" id="GO:0005774">
    <property type="term" value="C:vacuolar membrane"/>
    <property type="evidence" value="ECO:0007669"/>
    <property type="project" value="UniProtKB-SubCell"/>
</dbReference>
<dbReference type="GO" id="GO:0006914">
    <property type="term" value="P:autophagy"/>
    <property type="evidence" value="ECO:0007669"/>
    <property type="project" value="UniProtKB-KW"/>
</dbReference>
<dbReference type="GO" id="GO:0015031">
    <property type="term" value="P:protein transport"/>
    <property type="evidence" value="ECO:0007669"/>
    <property type="project" value="UniProtKB-KW"/>
</dbReference>
<dbReference type="FunFam" id="2.130.10.10:FF:000965">
    <property type="entry name" value="Autophagy-like protein 18 Atg18"/>
    <property type="match status" value="1"/>
</dbReference>
<dbReference type="Gene3D" id="2.130.10.10">
    <property type="entry name" value="YVTN repeat-like/Quinoprotein amine dehydrogenase"/>
    <property type="match status" value="1"/>
</dbReference>
<dbReference type="InterPro" id="IPR048720">
    <property type="entry name" value="PROPPIN"/>
</dbReference>
<dbReference type="InterPro" id="IPR015943">
    <property type="entry name" value="WD40/YVTN_repeat-like_dom_sf"/>
</dbReference>
<dbReference type="InterPro" id="IPR036322">
    <property type="entry name" value="WD40_repeat_dom_sf"/>
</dbReference>
<dbReference type="InterPro" id="IPR001680">
    <property type="entry name" value="WD40_rpt"/>
</dbReference>
<dbReference type="PANTHER" id="PTHR11227">
    <property type="entry name" value="WD-REPEAT PROTEIN INTERACTING WITH PHOSPHOINOSIDES WIPI -RELATED"/>
    <property type="match status" value="1"/>
</dbReference>
<dbReference type="Pfam" id="PF21032">
    <property type="entry name" value="PROPPIN"/>
    <property type="match status" value="2"/>
</dbReference>
<dbReference type="SMART" id="SM00320">
    <property type="entry name" value="WD40"/>
    <property type="match status" value="2"/>
</dbReference>
<dbReference type="SUPFAM" id="SSF50978">
    <property type="entry name" value="WD40 repeat-like"/>
    <property type="match status" value="1"/>
</dbReference>
<name>ATG18_PENRW</name>
<evidence type="ECO:0000250" key="1"/>
<evidence type="ECO:0000250" key="2">
    <source>
        <dbReference type="UniProtKB" id="P43601"/>
    </source>
</evidence>
<evidence type="ECO:0000256" key="3">
    <source>
        <dbReference type="SAM" id="MobiDB-lite"/>
    </source>
</evidence>
<evidence type="ECO:0000269" key="4">
    <source>
    </source>
</evidence>
<evidence type="ECO:0000305" key="5"/>